<name>VKT34_ACTEQ</name>
<feature type="chain" id="PRO_0000433573" description="Kunitz-type proteinase inhibitor AEPI-IV">
    <location>
        <begin position="1"/>
        <end position="37" status="greater than"/>
    </location>
</feature>
<feature type="domain" description="BPTI/Kunitz inhibitor" evidence="2">
    <location>
        <begin position="6"/>
        <end position="37" status="greater than"/>
    </location>
</feature>
<feature type="disulfide bond" evidence="2">
    <location>
        <begin position="6"/>
        <end status="unknown"/>
    </location>
</feature>
<feature type="disulfide bond" evidence="2">
    <location>
        <begin position="15"/>
        <end status="unknown"/>
    </location>
</feature>
<feature type="disulfide bond" evidence="2">
    <location>
        <begin position="31"/>
        <end status="unknown"/>
    </location>
</feature>
<feature type="non-terminal residue">
    <location>
        <position position="37"/>
    </location>
</feature>
<reference key="1">
    <citation type="journal article" date="1997" name="Fish. Sci.">
        <title>Amino acid sequences of Kunitz-type protease inhibitors from the sea anemone Actinia equina.</title>
        <authorList>
            <person name="Ishida M."/>
            <person name="Minagawa S."/>
            <person name="Miyauchi K."/>
            <person name="Shimakura K."/>
            <person name="Nagashima Y."/>
            <person name="Shiomi K."/>
        </authorList>
    </citation>
    <scope>PROTEIN SEQUENCE</scope>
</reference>
<reference key="2">
    <citation type="journal article" date="2012" name="Toxicon">
        <title>Development of a rational nomenclature for naming peptide and protein toxins from sea anemones.</title>
        <authorList>
            <person name="Oliveira J.S."/>
            <person name="Fuentes-Silva D."/>
            <person name="King G.F."/>
        </authorList>
    </citation>
    <scope>NOMENCLATURE</scope>
</reference>
<sequence length="37" mass="4308">DANSFCQLPAVVGRCRGRFPRYYYNTEAGKCQRFIYG</sequence>
<proteinExistence type="evidence at protein level"/>
<keyword id="KW-0903">Direct protein sequencing</keyword>
<keyword id="KW-1015">Disulfide bond</keyword>
<keyword id="KW-0872">Ion channel impairing toxin</keyword>
<keyword id="KW-0166">Nematocyst</keyword>
<keyword id="KW-0632">Potassium channel impairing toxin</keyword>
<keyword id="KW-0646">Protease inhibitor</keyword>
<keyword id="KW-0964">Secreted</keyword>
<keyword id="KW-0722">Serine protease inhibitor</keyword>
<keyword id="KW-0800">Toxin</keyword>
<protein>
    <recommendedName>
        <fullName evidence="3">Kunitz-type proteinase inhibitor AEPI-IV</fullName>
    </recommendedName>
</protein>
<evidence type="ECO:0000250" key="1">
    <source>
        <dbReference type="UniProtKB" id="B1B5I8"/>
    </source>
</evidence>
<evidence type="ECO:0000255" key="2">
    <source>
        <dbReference type="PROSITE-ProRule" id="PRU00031"/>
    </source>
</evidence>
<evidence type="ECO:0000303" key="3">
    <source ref="1"/>
</evidence>
<evidence type="ECO:0000305" key="4"/>
<dbReference type="SMR" id="P0DMW9"/>
<dbReference type="GO" id="GO:0005576">
    <property type="term" value="C:extracellular region"/>
    <property type="evidence" value="ECO:0007669"/>
    <property type="project" value="UniProtKB-SubCell"/>
</dbReference>
<dbReference type="GO" id="GO:0042151">
    <property type="term" value="C:nematocyst"/>
    <property type="evidence" value="ECO:0007669"/>
    <property type="project" value="UniProtKB-SubCell"/>
</dbReference>
<dbReference type="GO" id="GO:0015459">
    <property type="term" value="F:potassium channel regulator activity"/>
    <property type="evidence" value="ECO:0007669"/>
    <property type="project" value="UniProtKB-KW"/>
</dbReference>
<dbReference type="GO" id="GO:0004867">
    <property type="term" value="F:serine-type endopeptidase inhibitor activity"/>
    <property type="evidence" value="ECO:0007669"/>
    <property type="project" value="UniProtKB-KW"/>
</dbReference>
<dbReference type="GO" id="GO:0090729">
    <property type="term" value="F:toxin activity"/>
    <property type="evidence" value="ECO:0007669"/>
    <property type="project" value="UniProtKB-KW"/>
</dbReference>
<dbReference type="Gene3D" id="4.10.410.10">
    <property type="entry name" value="Pancreatic trypsin inhibitor Kunitz domain"/>
    <property type="match status" value="1"/>
</dbReference>
<dbReference type="InterPro" id="IPR002223">
    <property type="entry name" value="Kunitz_BPTI"/>
</dbReference>
<dbReference type="InterPro" id="IPR036880">
    <property type="entry name" value="Kunitz_BPTI_sf"/>
</dbReference>
<dbReference type="PANTHER" id="PTHR47247">
    <property type="entry name" value="KUNITZ-TYPE PROTEASE INHIBITOR 2"/>
    <property type="match status" value="1"/>
</dbReference>
<dbReference type="PANTHER" id="PTHR47247:SF1">
    <property type="entry name" value="KUNITZ-TYPE PROTEASE INHIBITOR 2"/>
    <property type="match status" value="1"/>
</dbReference>
<dbReference type="Pfam" id="PF00014">
    <property type="entry name" value="Kunitz_BPTI"/>
    <property type="match status" value="1"/>
</dbReference>
<dbReference type="SMART" id="SM00131">
    <property type="entry name" value="KU"/>
    <property type="match status" value="1"/>
</dbReference>
<dbReference type="SUPFAM" id="SSF57362">
    <property type="entry name" value="BPTI-like"/>
    <property type="match status" value="1"/>
</dbReference>
<dbReference type="PROSITE" id="PS50279">
    <property type="entry name" value="BPTI_KUNITZ_2"/>
    <property type="match status" value="1"/>
</dbReference>
<accession>P0DMW9</accession>
<comment type="function">
    <text evidence="1">Dual-function toxin that inhibits both the serine protease trypsin and voltage-gated potassium channels (Kv).</text>
</comment>
<comment type="subcellular location">
    <subcellularLocation>
        <location evidence="4">Secreted</location>
    </subcellularLocation>
    <subcellularLocation>
        <location evidence="4">Nematocyst</location>
    </subcellularLocation>
</comment>
<comment type="similarity">
    <text evidence="4">Belongs to the venom Kunitz-type family. Sea anemone type 2 potassium channel toxin subfamily.</text>
</comment>
<organism>
    <name type="scientific">Actinia equina</name>
    <name type="common">Beadlet anemone</name>
    <dbReference type="NCBI Taxonomy" id="6106"/>
    <lineage>
        <taxon>Eukaryota</taxon>
        <taxon>Metazoa</taxon>
        <taxon>Cnidaria</taxon>
        <taxon>Anthozoa</taxon>
        <taxon>Hexacorallia</taxon>
        <taxon>Actiniaria</taxon>
        <taxon>Actiniidae</taxon>
        <taxon>Actinia</taxon>
    </lineage>
</organism>